<proteinExistence type="evidence at transcript level"/>
<keyword id="KW-1064">Adaptive immunity</keyword>
<keyword id="KW-1003">Cell membrane</keyword>
<keyword id="KW-1015">Disulfide bond</keyword>
<keyword id="KW-0297">G-protein coupled receptor</keyword>
<keyword id="KW-0391">Immunity</keyword>
<keyword id="KW-0395">Inflammatory response</keyword>
<keyword id="KW-0399">Innate immunity</keyword>
<keyword id="KW-0472">Membrane</keyword>
<keyword id="KW-0597">Phosphoprotein</keyword>
<keyword id="KW-0675">Receptor</keyword>
<keyword id="KW-1185">Reference proteome</keyword>
<keyword id="KW-0807">Transducer</keyword>
<keyword id="KW-0812">Transmembrane</keyword>
<keyword id="KW-1133">Transmembrane helix</keyword>
<accession>A6QNL7</accession>
<organism>
    <name type="scientific">Bos taurus</name>
    <name type="common">Bovine</name>
    <dbReference type="NCBI Taxonomy" id="9913"/>
    <lineage>
        <taxon>Eukaryota</taxon>
        <taxon>Metazoa</taxon>
        <taxon>Chordata</taxon>
        <taxon>Craniata</taxon>
        <taxon>Vertebrata</taxon>
        <taxon>Euteleostomi</taxon>
        <taxon>Mammalia</taxon>
        <taxon>Eutheria</taxon>
        <taxon>Laurasiatheria</taxon>
        <taxon>Artiodactyla</taxon>
        <taxon>Ruminantia</taxon>
        <taxon>Pecora</taxon>
        <taxon>Bovidae</taxon>
        <taxon>Bovinae</taxon>
        <taxon>Bos</taxon>
    </lineage>
</organism>
<sequence length="358" mass="40849">MHTTLPESTSENFEYYDLAEACDMGDIVALGTVFVVILYSLVFAFGLVGNLLVVFALINSQRSKSITDIYLLNLALSDLLFVATLPFWTHYVINEQGLHHATCKLITAFFFIGFFGGIFFITVISVDRFLAIVLAANSMSNRTVQHGVTTSLGVWAAAILVATPQFMFTREKENECFGDYPEILQEIWPVILNTEINFLGFLLPLLIMSYCYFRIMQTLFSCKNHKKAKAIRLIFLVVVVFFLFWTPYNVMIFLQTLNLYDFFPKCDVKRDLKLAISVTETIAFSHCCLNPLIYAFAGEKFRRYLYRLYRKCLAVLCCHPDHLSFSSSLSESQRSRRESVLSSNFTHYTSDGDASILL</sequence>
<dbReference type="EMBL" id="BC148890">
    <property type="protein sequence ID" value="AAI48891.1"/>
    <property type="molecule type" value="mRNA"/>
</dbReference>
<dbReference type="RefSeq" id="NP_001096028.1">
    <property type="nucleotide sequence ID" value="NM_001102558.2"/>
</dbReference>
<dbReference type="RefSeq" id="XP_010815705.1">
    <property type="nucleotide sequence ID" value="XM_010817403.2"/>
</dbReference>
<dbReference type="RefSeq" id="XP_059735434.1">
    <property type="nucleotide sequence ID" value="XM_059879451.1"/>
</dbReference>
<dbReference type="SMR" id="A6QNL7"/>
<dbReference type="FunCoup" id="A6QNL7">
    <property type="interactions" value="176"/>
</dbReference>
<dbReference type="STRING" id="9913.ENSBTAP00000058721"/>
<dbReference type="PaxDb" id="9913-ENSBTAP00000003797"/>
<dbReference type="Ensembl" id="ENSBTAT00000003797.6">
    <property type="protein sequence ID" value="ENSBTAP00000003797.4"/>
    <property type="gene ID" value="ENSBTAG00000002923.6"/>
</dbReference>
<dbReference type="Ensembl" id="ENSBTAT00000086040.2">
    <property type="protein sequence ID" value="ENSBTAP00000058721.2"/>
    <property type="gene ID" value="ENSBTAG00000002923.6"/>
</dbReference>
<dbReference type="GeneID" id="100124525"/>
<dbReference type="KEGG" id="bta:100124525"/>
<dbReference type="CTD" id="1524"/>
<dbReference type="VEuPathDB" id="HostDB:ENSBTAG00000002923"/>
<dbReference type="VGNC" id="VGNC:27845">
    <property type="gene designation" value="CX3CR1"/>
</dbReference>
<dbReference type="eggNOG" id="ENOG502QVQK">
    <property type="taxonomic scope" value="Eukaryota"/>
</dbReference>
<dbReference type="GeneTree" id="ENSGT01020000230359"/>
<dbReference type="HOGENOM" id="CLU_009579_8_3_1"/>
<dbReference type="InParanoid" id="A6QNL7"/>
<dbReference type="OMA" id="TDIQEFG"/>
<dbReference type="OrthoDB" id="5981253at2759"/>
<dbReference type="TreeFam" id="TF330966"/>
<dbReference type="Reactome" id="R-BTA-380108">
    <property type="pathway name" value="Chemokine receptors bind chemokines"/>
</dbReference>
<dbReference type="Reactome" id="R-BTA-418594">
    <property type="pathway name" value="G alpha (i) signalling events"/>
</dbReference>
<dbReference type="Proteomes" id="UP000009136">
    <property type="component" value="Chromosome 22"/>
</dbReference>
<dbReference type="Bgee" id="ENSBTAG00000002923">
    <property type="expression patterns" value="Expressed in temporal cortex and 101 other cell types or tissues"/>
</dbReference>
<dbReference type="GO" id="GO:0009897">
    <property type="term" value="C:external side of plasma membrane"/>
    <property type="evidence" value="ECO:0000318"/>
    <property type="project" value="GO_Central"/>
</dbReference>
<dbReference type="GO" id="GO:0019957">
    <property type="term" value="F:C-C chemokine binding"/>
    <property type="evidence" value="ECO:0000318"/>
    <property type="project" value="GO_Central"/>
</dbReference>
<dbReference type="GO" id="GO:0016493">
    <property type="term" value="F:C-C chemokine receptor activity"/>
    <property type="evidence" value="ECO:0000318"/>
    <property type="project" value="GO_Central"/>
</dbReference>
<dbReference type="GO" id="GO:0019960">
    <property type="term" value="F:C-X3-C chemokine binding"/>
    <property type="evidence" value="ECO:0000250"/>
    <property type="project" value="UniProtKB"/>
</dbReference>
<dbReference type="GO" id="GO:0016495">
    <property type="term" value="F:C-X3-C chemokine receptor activity"/>
    <property type="evidence" value="ECO:0007669"/>
    <property type="project" value="Ensembl"/>
</dbReference>
<dbReference type="GO" id="GO:0031737">
    <property type="term" value="F:CX3C chemokine receptor binding"/>
    <property type="evidence" value="ECO:0007669"/>
    <property type="project" value="Ensembl"/>
</dbReference>
<dbReference type="GO" id="GO:0002250">
    <property type="term" value="P:adaptive immune response"/>
    <property type="evidence" value="ECO:0000250"/>
    <property type="project" value="UniProtKB"/>
</dbReference>
<dbReference type="GO" id="GO:0061760">
    <property type="term" value="P:antifungal innate immune response"/>
    <property type="evidence" value="ECO:0000250"/>
    <property type="project" value="UniProtKB"/>
</dbReference>
<dbReference type="GO" id="GO:0007420">
    <property type="term" value="P:brain development"/>
    <property type="evidence" value="ECO:0000250"/>
    <property type="project" value="UniProtKB"/>
</dbReference>
<dbReference type="GO" id="GO:0019722">
    <property type="term" value="P:calcium-mediated signaling"/>
    <property type="evidence" value="ECO:0000318"/>
    <property type="project" value="GO_Central"/>
</dbReference>
<dbReference type="GO" id="GO:0060326">
    <property type="term" value="P:cell chemotaxis"/>
    <property type="evidence" value="ECO:0000318"/>
    <property type="project" value="GO_Central"/>
</dbReference>
<dbReference type="GO" id="GO:0071222">
    <property type="term" value="P:cellular response to lipopolysaccharide"/>
    <property type="evidence" value="ECO:0007669"/>
    <property type="project" value="Ensembl"/>
</dbReference>
<dbReference type="GO" id="GO:0021626">
    <property type="term" value="P:central nervous system maturation"/>
    <property type="evidence" value="ECO:0007669"/>
    <property type="project" value="Ensembl"/>
</dbReference>
<dbReference type="GO" id="GO:0048874">
    <property type="term" value="P:host-mediated regulation of intestinal microbiota composition"/>
    <property type="evidence" value="ECO:0000250"/>
    <property type="project" value="UniProtKB"/>
</dbReference>
<dbReference type="GO" id="GO:0006955">
    <property type="term" value="P:immune response"/>
    <property type="evidence" value="ECO:0000250"/>
    <property type="project" value="UniProtKB"/>
</dbReference>
<dbReference type="GO" id="GO:0030595">
    <property type="term" value="P:leukocyte chemotaxis"/>
    <property type="evidence" value="ECO:0000250"/>
    <property type="project" value="UniProtKB"/>
</dbReference>
<dbReference type="GO" id="GO:0050901">
    <property type="term" value="P:leukocyte tethering or rolling"/>
    <property type="evidence" value="ECO:0007669"/>
    <property type="project" value="Ensembl"/>
</dbReference>
<dbReference type="GO" id="GO:0002282">
    <property type="term" value="P:microglial cell activation involved in immune response"/>
    <property type="evidence" value="ECO:0000250"/>
    <property type="project" value="UniProtKB"/>
</dbReference>
<dbReference type="GO" id="GO:0050804">
    <property type="term" value="P:modulation of chemical synaptic transmission"/>
    <property type="evidence" value="ECO:0007669"/>
    <property type="project" value="Ensembl"/>
</dbReference>
<dbReference type="GO" id="GO:0150090">
    <property type="term" value="P:multiple spine synapse organization, single dendrite"/>
    <property type="evidence" value="ECO:0007669"/>
    <property type="project" value="Ensembl"/>
</dbReference>
<dbReference type="GO" id="GO:0016525">
    <property type="term" value="P:negative regulation of angiogenesis"/>
    <property type="evidence" value="ECO:0007669"/>
    <property type="project" value="Ensembl"/>
</dbReference>
<dbReference type="GO" id="GO:1904150">
    <property type="term" value="P:negative regulation of microglial cell mediated cytotoxicity"/>
    <property type="evidence" value="ECO:0000250"/>
    <property type="project" value="UniProtKB"/>
</dbReference>
<dbReference type="GO" id="GO:0007200">
    <property type="term" value="P:phospholipase C-activating G protein-coupled receptor signaling pathway"/>
    <property type="evidence" value="ECO:0007669"/>
    <property type="project" value="Ensembl"/>
</dbReference>
<dbReference type="GO" id="GO:0007204">
    <property type="term" value="P:positive regulation of cytosolic calcium ion concentration"/>
    <property type="evidence" value="ECO:0000318"/>
    <property type="project" value="GO_Central"/>
</dbReference>
<dbReference type="GO" id="GO:0090026">
    <property type="term" value="P:positive regulation of monocyte chemotaxis"/>
    <property type="evidence" value="ECO:0007669"/>
    <property type="project" value="Ensembl"/>
</dbReference>
<dbReference type="GO" id="GO:0050769">
    <property type="term" value="P:positive regulation of neurogenesis"/>
    <property type="evidence" value="ECO:0007669"/>
    <property type="project" value="Ensembl"/>
</dbReference>
<dbReference type="GO" id="GO:0045428">
    <property type="term" value="P:regulation of nitric oxide biosynthetic process"/>
    <property type="evidence" value="ECO:0007669"/>
    <property type="project" value="Ensembl"/>
</dbReference>
<dbReference type="GO" id="GO:0032680">
    <property type="term" value="P:regulation of tumor necrosis factor production"/>
    <property type="evidence" value="ECO:0007669"/>
    <property type="project" value="Ensembl"/>
</dbReference>
<dbReference type="GO" id="GO:0035176">
    <property type="term" value="P:social behavior"/>
    <property type="evidence" value="ECO:0007669"/>
    <property type="project" value="Ensembl"/>
</dbReference>
<dbReference type="GO" id="GO:0060074">
    <property type="term" value="P:synapse maturation"/>
    <property type="evidence" value="ECO:0007669"/>
    <property type="project" value="Ensembl"/>
</dbReference>
<dbReference type="GO" id="GO:0098883">
    <property type="term" value="P:synapse pruning"/>
    <property type="evidence" value="ECO:0000250"/>
    <property type="project" value="UniProtKB"/>
</dbReference>
<dbReference type="CDD" id="cd15186">
    <property type="entry name" value="7tmA_CX3CR1"/>
    <property type="match status" value="1"/>
</dbReference>
<dbReference type="FunFam" id="1.20.1070.10:FF:000026">
    <property type="entry name" value="C-C chemokine receptor type 5"/>
    <property type="match status" value="1"/>
</dbReference>
<dbReference type="Gene3D" id="1.20.1070.10">
    <property type="entry name" value="Rhodopsin 7-helix transmembrane proteins"/>
    <property type="match status" value="1"/>
</dbReference>
<dbReference type="InterPro" id="IPR050119">
    <property type="entry name" value="CCR1-9-like"/>
</dbReference>
<dbReference type="InterPro" id="IPR005387">
    <property type="entry name" value="Chemokine_CX3CR1"/>
</dbReference>
<dbReference type="InterPro" id="IPR000276">
    <property type="entry name" value="GPCR_Rhodpsn"/>
</dbReference>
<dbReference type="InterPro" id="IPR017452">
    <property type="entry name" value="GPCR_Rhodpsn_7TM"/>
</dbReference>
<dbReference type="PANTHER" id="PTHR10489">
    <property type="entry name" value="CELL ADHESION MOLECULE"/>
    <property type="match status" value="1"/>
</dbReference>
<dbReference type="PANTHER" id="PTHR10489:SF955">
    <property type="entry name" value="CX3C CHEMOKINE RECEPTOR 1"/>
    <property type="match status" value="1"/>
</dbReference>
<dbReference type="Pfam" id="PF00001">
    <property type="entry name" value="7tm_1"/>
    <property type="match status" value="1"/>
</dbReference>
<dbReference type="PRINTS" id="PR01562">
    <property type="entry name" value="FRACTALKINER"/>
</dbReference>
<dbReference type="PRINTS" id="PR00237">
    <property type="entry name" value="GPCRRHODOPSN"/>
</dbReference>
<dbReference type="SUPFAM" id="SSF81321">
    <property type="entry name" value="Family A G protein-coupled receptor-like"/>
    <property type="match status" value="1"/>
</dbReference>
<dbReference type="PROSITE" id="PS00237">
    <property type="entry name" value="G_PROTEIN_RECEP_F1_1"/>
    <property type="match status" value="1"/>
</dbReference>
<dbReference type="PROSITE" id="PS50262">
    <property type="entry name" value="G_PROTEIN_RECEP_F1_2"/>
    <property type="match status" value="1"/>
</dbReference>
<reference key="1">
    <citation type="submission" date="2007-07" db="EMBL/GenBank/DDBJ databases">
        <authorList>
            <consortium name="NIH - Mammalian Gene Collection (MGC) project"/>
        </authorList>
    </citation>
    <scope>NUCLEOTIDE SEQUENCE [LARGE SCALE MRNA]</scope>
    <source>
        <strain>Hereford</strain>
        <tissue>Hypothalamus</tissue>
    </source>
</reference>
<protein>
    <recommendedName>
        <fullName evidence="2">CX3C chemokine receptor 1</fullName>
        <shortName evidence="2">C-X3-C CKR-1</shortName>
        <shortName evidence="2">CX3CR1</shortName>
    </recommendedName>
    <alternativeName>
        <fullName evidence="2">Fractalkine receptor</fullName>
    </alternativeName>
</protein>
<gene>
    <name evidence="2" type="primary">CX3CR1</name>
</gene>
<evidence type="ECO:0000250" key="1">
    <source>
        <dbReference type="UniProtKB" id="P35411"/>
    </source>
</evidence>
<evidence type="ECO:0000250" key="2">
    <source>
        <dbReference type="UniProtKB" id="P49238"/>
    </source>
</evidence>
<evidence type="ECO:0000250" key="3">
    <source>
        <dbReference type="UniProtKB" id="Q9Z0D9"/>
    </source>
</evidence>
<evidence type="ECO:0000255" key="4"/>
<evidence type="ECO:0000255" key="5">
    <source>
        <dbReference type="PROSITE-ProRule" id="PRU00521"/>
    </source>
</evidence>
<feature type="chain" id="PRO_0000375805" description="CX3C chemokine receptor 1">
    <location>
        <begin position="1"/>
        <end position="358"/>
    </location>
</feature>
<feature type="topological domain" description="Extracellular" evidence="4">
    <location>
        <begin position="1"/>
        <end position="26"/>
    </location>
</feature>
<feature type="transmembrane region" description="Helical; Name=1" evidence="4">
    <location>
        <begin position="27"/>
        <end position="47"/>
    </location>
</feature>
<feature type="topological domain" description="Cytoplasmic" evidence="4">
    <location>
        <begin position="48"/>
        <end position="68"/>
    </location>
</feature>
<feature type="transmembrane region" description="Helical; Name=2" evidence="4">
    <location>
        <begin position="69"/>
        <end position="89"/>
    </location>
</feature>
<feature type="topological domain" description="Extracellular" evidence="4">
    <location>
        <begin position="90"/>
        <end position="105"/>
    </location>
</feature>
<feature type="transmembrane region" description="Helical; Name=3" evidence="4">
    <location>
        <begin position="106"/>
        <end position="126"/>
    </location>
</feature>
<feature type="topological domain" description="Cytoplasmic" evidence="4">
    <location>
        <begin position="127"/>
        <end position="147"/>
    </location>
</feature>
<feature type="transmembrane region" description="Helical; Name=4" evidence="4">
    <location>
        <begin position="148"/>
        <end position="168"/>
    </location>
</feature>
<feature type="topological domain" description="Extracellular" evidence="4">
    <location>
        <begin position="169"/>
        <end position="186"/>
    </location>
</feature>
<feature type="transmembrane region" description="Helical; Name=5" evidence="4">
    <location>
        <begin position="187"/>
        <end position="207"/>
    </location>
</feature>
<feature type="topological domain" description="Cytoplasmic" evidence="4">
    <location>
        <begin position="208"/>
        <end position="232"/>
    </location>
</feature>
<feature type="transmembrane region" description="Helical; Name=6" evidence="4">
    <location>
        <begin position="233"/>
        <end position="253"/>
    </location>
</feature>
<feature type="topological domain" description="Extracellular" evidence="4">
    <location>
        <begin position="254"/>
        <end position="275"/>
    </location>
</feature>
<feature type="transmembrane region" description="Helical; Name=7" evidence="4">
    <location>
        <begin position="276"/>
        <end position="296"/>
    </location>
</feature>
<feature type="topological domain" description="Cytoplasmic" evidence="4">
    <location>
        <begin position="297"/>
        <end position="358"/>
    </location>
</feature>
<feature type="modified residue" description="Phosphothreonine" evidence="3">
    <location>
        <position position="349"/>
    </location>
</feature>
<feature type="disulfide bond" evidence="5">
    <location>
        <begin position="103"/>
        <end position="176"/>
    </location>
</feature>
<comment type="function">
    <text evidence="2 3">Receptor for the C-X3-C chemokine fractalkine (CX3CL1) present on many early leukocyte cells; CX3CR1-CX3CL1 signaling exerts distinct functions in different tissue compartments, such as immune response, inflammation, cell adhesion and chemotaxis. CX3CR1-CX3CL1 signaling mediates cell migratory functions. Responsible for the recruitment of natural killer (NK) cells to inflamed tissues. Acts as a regulator of inflammation process leading to atherogenesis by mediating macrophage and monocyte recruitment to inflamed atherosclerotic plaques, promoting cell survival. Involved in airway inflammation by promoting interleukin 2-producing T helper (Th2) cell survival in inflamed lung. Involved in the migration of circulating monocytes to non-inflamed tissues, where they differentiate into macrophages and dendritic cells. Acts as a negative regulator of angiogenesis, probably by promoting macrophage chemotaxis. Plays a key role in brain microglia by regulating inflammatory response in the central nervous system (CNS) and regulating synapse maturation. Required to restrain the microglial inflammatory response in the CNS and the resulting parenchymal damage in response to pathological stimuli. Involved in brain development by participating in synaptic pruning, a natural process during which brain microglia eliminates extra synapses during postnatal development. Synaptic pruning by microglia is required to promote the maturation of circuit connectivity during brain development. Acts as an important regulator of the gut microbiota by controlling immunity to intestinal bacteria and fungi. Expressed in lamina propria dendritic cells in the small intestine, which form transepithelial dendrites capable of taking up bacteria in order to provide defense against pathogenic bacteria. Required to initiate innate and adaptive immune responses against dissemination of commensal fungi (mycobiota) component of the gut: expressed in mononuclear phagocytes (MNPs) and acts by promoting induction of antifungal IgG antibodies response to confer protection against disseminated C.albicans or C.auris infection (By similarity). Also acts as a receptor for C-C motif chemokine CCL26, inducing cell chemotaxis (By similarity).</text>
</comment>
<comment type="subunit">
    <text evidence="2">Found in a ternary complex with CX3CL1 and ITGAV:ITGB3 or ITGA4:ITGB1.</text>
</comment>
<comment type="subcellular location">
    <subcellularLocation>
        <location evidence="2">Cell membrane</location>
        <topology evidence="4">Multi-pass membrane protein</topology>
    </subcellularLocation>
</comment>
<comment type="PTM">
    <text evidence="1">This protein is not N-glycosylated which is unusual for G-protein-coupled receptors.</text>
</comment>
<comment type="similarity">
    <text evidence="5">Belongs to the G-protein coupled receptor 1 family.</text>
</comment>
<name>CX3C1_BOVIN</name>